<name>GPR18_HUMAN</name>
<sequence length="331" mass="38134">MITLNNQDQPVPFNSSHPDEYKIAALVFYSCIFIIGLFVNITALWVFSCTTKKRTTVTIYMMNVALVDLIFIMTLPFRMFYYAKDEWPFGEYFCQILGALTVFYPSIALWLLAFISADRYMAIVQPKYAKELKNTCKAVLACVGVWIMTLTTTTPLLLLYKDPDKDSTPATCLKISDIIYLKAVNVLNLTRLTFFFLIPLFIMIGCYLVIIHNLLHGRTSKLKPKVKEKSIRIIITLLVQVLVCFMPFHICFAFLMLGTGENSYNPWGAFTTFLMNLSTCLDVILYYIVSKQFQARVISVMLYRNYLRSMRRKSFRSGSLRSLSNINSEML</sequence>
<comment type="function">
    <text evidence="1 4 5 6 7 9 10">G protein-coupled receptor (GPCR) that plays a role in diverse physiological processes particularly within the immune and nervous systems (PubMed:21732409, PubMed:26195725). Becomes active when triggered by various endogenous ligands including endocannabinoid N-arachidonyl glycine (NAGly), delta-9-tetrahydrocannabinol or resolvin D2/RvD2 derived from the omega-3 fatty acid docosahexaenoic acid (DHA) (PubMed:16844083, PubMed:24762058, PubMed:26195725, PubMed:27572937). Upon RvD2 binding, facilitates the resolution of inflammation, aiding in tissue repair and homeostasis. Mechanistically, RvD2 ligation initiates Galphas protein coupling, activation of cAMP-PKA signaling pathway and phosphorylation of STAT3, leading to RvD2-stimulated macrophage phagocytosis (PubMed:27994074). Mediates NAGly-induced process of reorganization of actin filaments and induction of acrosomal exocytosis (PubMed:27572937). Activation by N-arachidonoyl glycine (NAGly) can also induce apoptosis in macrophages (By similarity). Plays a role in homeostasis of CD8+ subsets of intraepithelial lymphocytes (IELs) (CD8alphaalpha and CD8alphabeta IELs) in small intestine by supporting preferential migration of CD8alphaalpha T-cells to intraepithelial compartment over lamina propria compartment, and by mediating their reconstitution into small intestine after bone marrow transplant (By similarity). Also participates in hypotensive responses, mediating reduction in intraocular and blood pressure (By similarity).</text>
</comment>
<comment type="subcellular location">
    <subcellularLocation>
        <location evidence="6 8">Cell membrane</location>
        <topology evidence="2">Multi-pass membrane protein</topology>
    </subcellularLocation>
    <subcellularLocation>
        <location evidence="6">Cytoplasmic vesicle membrane</location>
    </subcellularLocation>
</comment>
<comment type="tissue specificity">
    <text evidence="4 9">Expressed in midpiece of spermatozoon (at protein level) (PubMed:27572937). Most abundant in testis and spleen (PubMed:16844083). Highly expressed in CD4 and CD8-positive T-cells as well as CD19-positive B-cells (PubMed:16844083).</text>
</comment>
<comment type="similarity">
    <text evidence="3">Belongs to the G-protein coupled receptor 1 family.</text>
</comment>
<comment type="sequence caution" evidence="11">
    <conflict type="frameshift">
        <sequence resource="EMBL-CDS" id="AAG44671"/>
    </conflict>
</comment>
<evidence type="ECO:0000250" key="1">
    <source>
        <dbReference type="UniProtKB" id="Q8K1Z6"/>
    </source>
</evidence>
<evidence type="ECO:0000255" key="2"/>
<evidence type="ECO:0000255" key="3">
    <source>
        <dbReference type="PROSITE-ProRule" id="PRU00521"/>
    </source>
</evidence>
<evidence type="ECO:0000269" key="4">
    <source>
    </source>
</evidence>
<evidence type="ECO:0000269" key="5">
    <source>
    </source>
</evidence>
<evidence type="ECO:0000269" key="6">
    <source>
    </source>
</evidence>
<evidence type="ECO:0000269" key="7">
    <source>
    </source>
</evidence>
<evidence type="ECO:0000269" key="8">
    <source>
    </source>
</evidence>
<evidence type="ECO:0000269" key="9">
    <source>
    </source>
</evidence>
<evidence type="ECO:0000269" key="10">
    <source>
    </source>
</evidence>
<evidence type="ECO:0000305" key="11"/>
<reference key="1">
    <citation type="journal article" date="1997" name="Genomics">
        <title>Cloning and chromosomal localization of a gene (GPR18) encoding a novel seven transmembrane receptor highly expressed in spleen and testis.</title>
        <authorList>
            <person name="Gantz I."/>
            <person name="Muraoka A."/>
            <person name="Yang Y.-K."/>
            <person name="Samuelson L.C."/>
            <person name="Zimmerman E.M."/>
            <person name="Cook H."/>
            <person name="Yamada T."/>
        </authorList>
    </citation>
    <scope>NUCLEOTIDE SEQUENCE [GENOMIC DNA]</scope>
</reference>
<reference key="2">
    <citation type="journal article" date="2006" name="Biochem. Biophys. Res. Commun.">
        <title>Identification of N-arachidonylglycine as the endogenous ligand for orphan G-protein-coupled receptor GPR18.</title>
        <authorList>
            <person name="Kohno M."/>
            <person name="Hasegawa H."/>
            <person name="Inoue A."/>
            <person name="Muraoka M."/>
            <person name="Miyazaki T."/>
            <person name="Oka K."/>
            <person name="Yasukawa M."/>
        </authorList>
    </citation>
    <scope>NUCLEOTIDE SEQUENCE [MRNA]</scope>
    <scope>FUNCTION</scope>
    <scope>TISSUE SPECIFICITY</scope>
</reference>
<reference key="3">
    <citation type="submission" date="2000-05" db="EMBL/GenBank/DDBJ databases">
        <title>Novel genes expressed in human dendritic cell.</title>
        <authorList>
            <person name="Xu X."/>
            <person name="Yang Y."/>
            <person name="Gao G."/>
            <person name="Xiao H."/>
            <person name="Chen Z."/>
            <person name="Han Z."/>
        </authorList>
    </citation>
    <scope>NUCLEOTIDE SEQUENCE [LARGE SCALE MRNA]</scope>
    <source>
        <tissue>Dendritic cell</tissue>
    </source>
</reference>
<reference key="4">
    <citation type="submission" date="2003-08" db="EMBL/GenBank/DDBJ databases">
        <title>Cloning of human full-length CDSs in BD Creator(TM) system donor vector.</title>
        <authorList>
            <person name="Kalnine N."/>
            <person name="Chen X."/>
            <person name="Rolfs A."/>
            <person name="Halleck A."/>
            <person name="Hines L."/>
            <person name="Eisenstein S."/>
            <person name="Koundinya M."/>
            <person name="Raphael J."/>
            <person name="Moreira D."/>
            <person name="Kelley T."/>
            <person name="LaBaer J."/>
            <person name="Lin Y."/>
            <person name="Phelan M."/>
            <person name="Farmer A."/>
        </authorList>
    </citation>
    <scope>NUCLEOTIDE SEQUENCE [LARGE SCALE MRNA]</scope>
</reference>
<reference key="5">
    <citation type="journal article" date="2004" name="Nature">
        <title>The DNA sequence and analysis of human chromosome 13.</title>
        <authorList>
            <person name="Dunham A."/>
            <person name="Matthews L.H."/>
            <person name="Burton J."/>
            <person name="Ashurst J.L."/>
            <person name="Howe K.L."/>
            <person name="Ashcroft K.J."/>
            <person name="Beare D.M."/>
            <person name="Burford D.C."/>
            <person name="Hunt S.E."/>
            <person name="Griffiths-Jones S."/>
            <person name="Jones M.C."/>
            <person name="Keenan S.J."/>
            <person name="Oliver K."/>
            <person name="Scott C.E."/>
            <person name="Ainscough R."/>
            <person name="Almeida J.P."/>
            <person name="Ambrose K.D."/>
            <person name="Andrews D.T."/>
            <person name="Ashwell R.I.S."/>
            <person name="Babbage A.K."/>
            <person name="Bagguley C.L."/>
            <person name="Bailey J."/>
            <person name="Bannerjee R."/>
            <person name="Barlow K.F."/>
            <person name="Bates K."/>
            <person name="Beasley H."/>
            <person name="Bird C.P."/>
            <person name="Bray-Allen S."/>
            <person name="Brown A.J."/>
            <person name="Brown J.Y."/>
            <person name="Burrill W."/>
            <person name="Carder C."/>
            <person name="Carter N.P."/>
            <person name="Chapman J.C."/>
            <person name="Clamp M.E."/>
            <person name="Clark S.Y."/>
            <person name="Clarke G."/>
            <person name="Clee C.M."/>
            <person name="Clegg S.C."/>
            <person name="Cobley V."/>
            <person name="Collins J.E."/>
            <person name="Corby N."/>
            <person name="Coville G.J."/>
            <person name="Deloukas P."/>
            <person name="Dhami P."/>
            <person name="Dunham I."/>
            <person name="Dunn M."/>
            <person name="Earthrowl M.E."/>
            <person name="Ellington A.G."/>
            <person name="Faulkner L."/>
            <person name="Frankish A.G."/>
            <person name="Frankland J."/>
            <person name="French L."/>
            <person name="Garner P."/>
            <person name="Garnett J."/>
            <person name="Gilbert J.G.R."/>
            <person name="Gilson C.J."/>
            <person name="Ghori J."/>
            <person name="Grafham D.V."/>
            <person name="Gribble S.M."/>
            <person name="Griffiths C."/>
            <person name="Hall R.E."/>
            <person name="Hammond S."/>
            <person name="Harley J.L."/>
            <person name="Hart E.A."/>
            <person name="Heath P.D."/>
            <person name="Howden P.J."/>
            <person name="Huckle E.J."/>
            <person name="Hunt P.J."/>
            <person name="Hunt A.R."/>
            <person name="Johnson C."/>
            <person name="Johnson D."/>
            <person name="Kay M."/>
            <person name="Kimberley A.M."/>
            <person name="King A."/>
            <person name="Laird G.K."/>
            <person name="Langford C.J."/>
            <person name="Lawlor S."/>
            <person name="Leongamornlert D.A."/>
            <person name="Lloyd D.M."/>
            <person name="Lloyd C."/>
            <person name="Loveland J.E."/>
            <person name="Lovell J."/>
            <person name="Martin S."/>
            <person name="Mashreghi-Mohammadi M."/>
            <person name="McLaren S.J."/>
            <person name="McMurray A."/>
            <person name="Milne S."/>
            <person name="Moore M.J.F."/>
            <person name="Nickerson T."/>
            <person name="Palmer S.A."/>
            <person name="Pearce A.V."/>
            <person name="Peck A.I."/>
            <person name="Pelan S."/>
            <person name="Phillimore B."/>
            <person name="Porter K.M."/>
            <person name="Rice C.M."/>
            <person name="Searle S."/>
            <person name="Sehra H.K."/>
            <person name="Shownkeen R."/>
            <person name="Skuce C.D."/>
            <person name="Smith M."/>
            <person name="Steward C.A."/>
            <person name="Sycamore N."/>
            <person name="Tester J."/>
            <person name="Thomas D.W."/>
            <person name="Tracey A."/>
            <person name="Tromans A."/>
            <person name="Tubby B."/>
            <person name="Wall M."/>
            <person name="Wallis J.M."/>
            <person name="West A.P."/>
            <person name="Whitehead S.L."/>
            <person name="Willey D.L."/>
            <person name="Wilming L."/>
            <person name="Wray P.W."/>
            <person name="Wright M.W."/>
            <person name="Young L."/>
            <person name="Coulson A."/>
            <person name="Durbin R.M."/>
            <person name="Hubbard T."/>
            <person name="Sulston J.E."/>
            <person name="Beck S."/>
            <person name="Bentley D.R."/>
            <person name="Rogers J."/>
            <person name="Ross M.T."/>
        </authorList>
    </citation>
    <scope>NUCLEOTIDE SEQUENCE [LARGE SCALE GENOMIC DNA]</scope>
</reference>
<reference key="6">
    <citation type="journal article" date="2004" name="Genome Res.">
        <title>The status, quality, and expansion of the NIH full-length cDNA project: the Mammalian Gene Collection (MGC).</title>
        <authorList>
            <consortium name="The MGC Project Team"/>
        </authorList>
    </citation>
    <scope>NUCLEOTIDE SEQUENCE [LARGE SCALE MRNA]</scope>
    <source>
        <tissue>Lymph</tissue>
        <tissue>Testis</tissue>
    </source>
</reference>
<reference key="7">
    <citation type="journal article" date="2011" name="J. Cell. Biochem.">
        <title>Resolution of inflammation by N-arachidonoylglycine.</title>
        <authorList>
            <person name="Burstein S.H."/>
            <person name="McQuain C.A."/>
            <person name="Ross A.H."/>
            <person name="Salmonsen R.A."/>
            <person name="Zurier R.E."/>
        </authorList>
    </citation>
    <scope>FUNCTION</scope>
</reference>
<reference key="8">
    <citation type="journal article" date="2014" name="Br. J. Pharmacol.">
        <title>Activation of GPR18 by cannabinoid compounds: a tale of biased agonism.</title>
        <authorList>
            <person name="Console-Bram L."/>
            <person name="Brailoiu E."/>
            <person name="Brailoiu G.C."/>
            <person name="Sharir H."/>
            <person name="Abood M.E."/>
        </authorList>
    </citation>
    <scope>FUNCTION</scope>
    <scope>SUBCELLULAR LOCATION</scope>
</reference>
<reference key="9">
    <citation type="journal article" date="2015" name="J. Exp. Med.">
        <title>Identification of resolvin D2 receptor mediating resolution of infections and organ protection.</title>
        <authorList>
            <person name="Chiang N."/>
            <person name="Dalli J."/>
            <person name="Colas R.A."/>
            <person name="Serhan C.N."/>
        </authorList>
    </citation>
    <scope>FUNCTION</scope>
</reference>
<reference key="10">
    <citation type="journal article" date="2016" name="PeerJ">
        <title>GPR18 undergoes a high degree of constitutive trafficking but is unresponsive to N-Arachidonoyl Glycine.</title>
        <authorList>
            <person name="Finlay D.B."/>
            <person name="Joseph W.R."/>
            <person name="Grimsey N.L."/>
            <person name="Glass M."/>
        </authorList>
    </citation>
    <scope>FUNCTION</scope>
    <scope>SUBCELLULAR LOCATION</scope>
    <scope>MUTAGENESIS OF ALA-108</scope>
</reference>
<reference key="11">
    <citation type="journal article" date="2016" name="Sci. Rep.">
        <title>Characterization of non-olfactory GPCRs in human sperm with a focus on GPR18.</title>
        <authorList>
            <person name="Flegel C."/>
            <person name="Vogel F."/>
            <person name="Hofreuter A."/>
            <person name="Wojcik S."/>
            <person name="Schoeder C."/>
            <person name="Kiec-Kononowicz K."/>
            <person name="Brockmeyer N.H."/>
            <person name="Mueller C.E."/>
            <person name="Becker C."/>
            <person name="Altmueller J."/>
            <person name="Hatt H."/>
            <person name="Gisselmann G."/>
        </authorList>
    </citation>
    <scope>FUNCTION</scope>
    <scope>TISSUE SPECIFICITY</scope>
</reference>
<reference key="12">
    <citation type="journal article" date="2017" name="J. Immunol.">
        <title>Novel Resolvin D2 Receptor Axis in Infectious Inflammation.</title>
        <authorList>
            <person name="Chiang N."/>
            <person name="de la Rosa X."/>
            <person name="Libreros S."/>
            <person name="Serhan C.N."/>
        </authorList>
    </citation>
    <scope>FUNCTION</scope>
</reference>
<accession>Q14330</accession>
<accession>Q6GTM3</accession>
<accession>Q96HI6</accession>
<accession>Q9H2L2</accession>
<proteinExistence type="evidence at protein level"/>
<gene>
    <name type="primary">GPR18</name>
    <name type="synonym">GPCRW</name>
</gene>
<protein>
    <recommendedName>
        <fullName>N-arachidonyl glycine receptor</fullName>
        <shortName>NAGly receptor</shortName>
    </recommendedName>
    <alternativeName>
        <fullName>G-protein coupled receptor 18</fullName>
    </alternativeName>
</protein>
<feature type="chain" id="PRO_0000069537" description="N-arachidonyl glycine receptor">
    <location>
        <begin position="1"/>
        <end position="331"/>
    </location>
</feature>
<feature type="topological domain" description="Extracellular" evidence="2">
    <location>
        <begin position="1"/>
        <end position="26"/>
    </location>
</feature>
<feature type="transmembrane region" description="Helical; Name=1" evidence="2">
    <location>
        <begin position="27"/>
        <end position="47"/>
    </location>
</feature>
<feature type="topological domain" description="Cytoplasmic" evidence="2">
    <location>
        <begin position="48"/>
        <end position="56"/>
    </location>
</feature>
<feature type="transmembrane region" description="Helical; Name=2" evidence="2">
    <location>
        <begin position="57"/>
        <end position="77"/>
    </location>
</feature>
<feature type="topological domain" description="Extracellular" evidence="2">
    <location>
        <begin position="78"/>
        <end position="95"/>
    </location>
</feature>
<feature type="transmembrane region" description="Helical; Name=3" evidence="2">
    <location>
        <begin position="96"/>
        <end position="116"/>
    </location>
</feature>
<feature type="topological domain" description="Cytoplasmic" evidence="2">
    <location>
        <begin position="117"/>
        <end position="138"/>
    </location>
</feature>
<feature type="transmembrane region" description="Helical; Name=4" evidence="2">
    <location>
        <begin position="139"/>
        <end position="159"/>
    </location>
</feature>
<feature type="topological domain" description="Extracellular" evidence="2">
    <location>
        <begin position="160"/>
        <end position="191"/>
    </location>
</feature>
<feature type="transmembrane region" description="Helical; Name=5" evidence="2">
    <location>
        <begin position="192"/>
        <end position="212"/>
    </location>
</feature>
<feature type="topological domain" description="Cytoplasmic" evidence="2">
    <location>
        <begin position="213"/>
        <end position="232"/>
    </location>
</feature>
<feature type="transmembrane region" description="Helical; Name=6" evidence="2">
    <location>
        <begin position="233"/>
        <end position="253"/>
    </location>
</feature>
<feature type="topological domain" description="Extracellular" evidence="2">
    <location>
        <begin position="254"/>
        <end position="268"/>
    </location>
</feature>
<feature type="transmembrane region" description="Helical; Name=7" evidence="2">
    <location>
        <begin position="269"/>
        <end position="289"/>
    </location>
</feature>
<feature type="topological domain" description="Cytoplasmic" evidence="2">
    <location>
        <begin position="290"/>
        <end position="331"/>
    </location>
</feature>
<feature type="modified residue" description="Phosphoserine" evidence="1">
    <location>
        <position position="322"/>
    </location>
</feature>
<feature type="glycosylation site" description="N-linked (GlcNAc...) asparagine" evidence="2">
    <location>
        <position position="14"/>
    </location>
</feature>
<feature type="disulfide bond" evidence="3">
    <location>
        <begin position="94"/>
        <end position="172"/>
    </location>
</feature>
<feature type="mutagenesis site" description="Increased cell surface expression." evidence="8">
    <original>A</original>
    <variation>N</variation>
    <location>
        <position position="108"/>
    </location>
</feature>
<feature type="sequence conflict" description="In Ref. 1; AAB65819." evidence="11" ref="1">
    <original>P</original>
    <variation>T</variation>
    <location>
        <position position="12"/>
    </location>
</feature>
<feature type="sequence conflict" description="In Ref. 1; AAB65819." evidence="11" ref="1">
    <original>E</original>
    <variation>A</variation>
    <location>
        <position position="86"/>
    </location>
</feature>
<feature type="sequence conflict" description="In Ref. 1; AAB65819." evidence="11" ref="1">
    <original>L</original>
    <variation>I</variation>
    <location>
        <position position="97"/>
    </location>
</feature>
<feature type="sequence conflict" description="In Ref. 3; AAG44671." evidence="11" ref="3">
    <original>V</original>
    <variation>G</variation>
    <location>
        <position position="102"/>
    </location>
</feature>
<feature type="sequence conflict" description="In Ref. 3; AAG44671." evidence="11" ref="3">
    <original>L</original>
    <variation>F</variation>
    <location>
        <position position="112"/>
    </location>
</feature>
<feature type="sequence conflict" description="In Ref. 3; AAG44671." evidence="11" ref="3">
    <original>V</original>
    <variation>SS</variation>
    <location>
        <position position="145"/>
    </location>
</feature>
<feature type="sequence conflict" description="In Ref. 1; AAB65819." evidence="11" ref="1">
    <original>M</original>
    <variation>L</variation>
    <location>
        <position position="310"/>
    </location>
</feature>
<dbReference type="EMBL" id="L42324">
    <property type="protein sequence ID" value="AAB65819.1"/>
    <property type="molecule type" value="Genomic_DNA"/>
</dbReference>
<dbReference type="EMBL" id="AF261135">
    <property type="protein sequence ID" value="AAG44671.1"/>
    <property type="status" value="ALT_FRAME"/>
    <property type="molecule type" value="mRNA"/>
</dbReference>
<dbReference type="EMBL" id="BT009907">
    <property type="protein sequence ID" value="AAP88909.1"/>
    <property type="molecule type" value="mRNA"/>
</dbReference>
<dbReference type="EMBL" id="AL160155">
    <property type="status" value="NOT_ANNOTATED_CDS"/>
    <property type="molecule type" value="Genomic_DNA"/>
</dbReference>
<dbReference type="EMBL" id="BC008569">
    <property type="protein sequence ID" value="AAH08569.1"/>
    <property type="molecule type" value="mRNA"/>
</dbReference>
<dbReference type="EMBL" id="BC050646">
    <property type="protein sequence ID" value="AAH50646.1"/>
    <property type="molecule type" value="mRNA"/>
</dbReference>
<dbReference type="EMBL" id="BC066927">
    <property type="protein sequence ID" value="AAH66927.1"/>
    <property type="molecule type" value="mRNA"/>
</dbReference>
<dbReference type="CCDS" id="CCDS9491.1"/>
<dbReference type="RefSeq" id="NP_001091670.1">
    <property type="nucleotide sequence ID" value="NM_001098200.2"/>
</dbReference>
<dbReference type="RefSeq" id="NP_005283.1">
    <property type="nucleotide sequence ID" value="NM_005292.4"/>
</dbReference>
<dbReference type="RefSeq" id="XP_006720009.1">
    <property type="nucleotide sequence ID" value="XM_006719946.3"/>
</dbReference>
<dbReference type="RefSeq" id="XP_054230452.1">
    <property type="nucleotide sequence ID" value="XM_054374477.1"/>
</dbReference>
<dbReference type="RefSeq" id="XP_054230453.1">
    <property type="nucleotide sequence ID" value="XM_054374478.1"/>
</dbReference>
<dbReference type="RefSeq" id="XP_054230454.1">
    <property type="nucleotide sequence ID" value="XM_054374479.1"/>
</dbReference>
<dbReference type="SMR" id="Q14330"/>
<dbReference type="BioGRID" id="109100">
    <property type="interactions" value="106"/>
</dbReference>
<dbReference type="FunCoup" id="Q14330">
    <property type="interactions" value="808"/>
</dbReference>
<dbReference type="IntAct" id="Q14330">
    <property type="interactions" value="14"/>
</dbReference>
<dbReference type="STRING" id="9606.ENSP00000343428"/>
<dbReference type="BindingDB" id="Q14330"/>
<dbReference type="ChEMBL" id="CHEMBL2384898"/>
<dbReference type="DrugBank" id="DB09061">
    <property type="generic name" value="Cannabidiol"/>
</dbReference>
<dbReference type="DrugBank" id="DB00145">
    <property type="generic name" value="Glycine"/>
</dbReference>
<dbReference type="DrugBank" id="DB14009">
    <property type="generic name" value="Medical Cannabis"/>
</dbReference>
<dbReference type="DrugBank" id="DB14011">
    <property type="generic name" value="Nabiximols"/>
</dbReference>
<dbReference type="DrugCentral" id="Q14330"/>
<dbReference type="GuidetoPHARMACOLOGY" id="89"/>
<dbReference type="TCDB" id="9.A.14.13.39">
    <property type="family name" value="the g-protein-coupled receptor (gpcr) family"/>
</dbReference>
<dbReference type="GlyCosmos" id="Q14330">
    <property type="glycosylation" value="1 site, No reported glycans"/>
</dbReference>
<dbReference type="GlyGen" id="Q14330">
    <property type="glycosylation" value="1 site"/>
</dbReference>
<dbReference type="iPTMnet" id="Q14330"/>
<dbReference type="PhosphoSitePlus" id="Q14330"/>
<dbReference type="BioMuta" id="GPR18"/>
<dbReference type="DMDM" id="92087006"/>
<dbReference type="MassIVE" id="Q14330"/>
<dbReference type="PaxDb" id="9606-ENSP00000343428"/>
<dbReference type="PeptideAtlas" id="Q14330"/>
<dbReference type="ProteomicsDB" id="59966"/>
<dbReference type="Antibodypedia" id="2954">
    <property type="antibodies" value="349 antibodies from 30 providers"/>
</dbReference>
<dbReference type="DNASU" id="2841"/>
<dbReference type="Ensembl" id="ENST00000340807.3">
    <property type="protein sequence ID" value="ENSP00000343428.3"/>
    <property type="gene ID" value="ENSG00000125245.14"/>
</dbReference>
<dbReference type="Ensembl" id="ENST00000397470.5">
    <property type="protein sequence ID" value="ENSP00000380610.2"/>
    <property type="gene ID" value="ENSG00000125245.14"/>
</dbReference>
<dbReference type="Ensembl" id="ENST00000397473.7">
    <property type="protein sequence ID" value="ENSP00000380613.2"/>
    <property type="gene ID" value="ENSG00000125245.14"/>
</dbReference>
<dbReference type="Ensembl" id="ENST00000416594.2">
    <property type="protein sequence ID" value="ENSP00000401611.2"/>
    <property type="gene ID" value="ENSG00000125245.14"/>
</dbReference>
<dbReference type="GeneID" id="2841"/>
<dbReference type="KEGG" id="hsa:2841"/>
<dbReference type="MANE-Select" id="ENST00000397470.5">
    <property type="protein sequence ID" value="ENSP00000380610.2"/>
    <property type="RefSeq nucleotide sequence ID" value="NM_001098200.2"/>
    <property type="RefSeq protein sequence ID" value="NP_001091670.1"/>
</dbReference>
<dbReference type="UCSC" id="uc001voe.5">
    <property type="organism name" value="human"/>
</dbReference>
<dbReference type="AGR" id="HGNC:4472"/>
<dbReference type="CTD" id="2841"/>
<dbReference type="DisGeNET" id="2841"/>
<dbReference type="GeneCards" id="GPR18"/>
<dbReference type="HGNC" id="HGNC:4472">
    <property type="gene designation" value="GPR18"/>
</dbReference>
<dbReference type="HPA" id="ENSG00000125245">
    <property type="expression patterns" value="Group enriched (bone marrow, lymphoid tissue, testis)"/>
</dbReference>
<dbReference type="MIM" id="602042">
    <property type="type" value="gene"/>
</dbReference>
<dbReference type="neXtProt" id="NX_Q14330"/>
<dbReference type="OpenTargets" id="ENSG00000125245"/>
<dbReference type="PharmGKB" id="PA28860"/>
<dbReference type="VEuPathDB" id="HostDB:ENSG00000125245"/>
<dbReference type="eggNOG" id="ENOG502QT1V">
    <property type="taxonomic scope" value="Eukaryota"/>
</dbReference>
<dbReference type="GeneTree" id="ENSGT01130000278275"/>
<dbReference type="HOGENOM" id="CLU_009579_8_2_1"/>
<dbReference type="InParanoid" id="Q14330"/>
<dbReference type="OMA" id="TITIYMM"/>
<dbReference type="OrthoDB" id="5952950at2759"/>
<dbReference type="PAN-GO" id="Q14330">
    <property type="GO annotations" value="4 GO annotations based on evolutionary models"/>
</dbReference>
<dbReference type="PhylomeDB" id="Q14330"/>
<dbReference type="TreeFam" id="TF330775"/>
<dbReference type="PathwayCommons" id="Q14330"/>
<dbReference type="Reactome" id="R-HSA-373076">
    <property type="pathway name" value="Class A/1 (Rhodopsin-like receptors)"/>
</dbReference>
<dbReference type="Reactome" id="R-HSA-418594">
    <property type="pathway name" value="G alpha (i) signalling events"/>
</dbReference>
<dbReference type="SignaLink" id="Q14330"/>
<dbReference type="BioGRID-ORCS" id="2841">
    <property type="hits" value="6 hits in 1147 CRISPR screens"/>
</dbReference>
<dbReference type="ChiTaRS" id="GPR18">
    <property type="organism name" value="human"/>
</dbReference>
<dbReference type="GeneWiki" id="GPR18"/>
<dbReference type="GenomeRNAi" id="2841"/>
<dbReference type="Pharos" id="Q14330">
    <property type="development level" value="Tchem"/>
</dbReference>
<dbReference type="PRO" id="PR:Q14330"/>
<dbReference type="Proteomes" id="UP000005640">
    <property type="component" value="Chromosome 13"/>
</dbReference>
<dbReference type="RNAct" id="Q14330">
    <property type="molecule type" value="protein"/>
</dbReference>
<dbReference type="Bgee" id="ENSG00000125245">
    <property type="expression patterns" value="Expressed in sperm and 118 other cell types or tissues"/>
</dbReference>
<dbReference type="ExpressionAtlas" id="Q14330">
    <property type="expression patterns" value="baseline and differential"/>
</dbReference>
<dbReference type="GO" id="GO:0030659">
    <property type="term" value="C:cytoplasmic vesicle membrane"/>
    <property type="evidence" value="ECO:0007669"/>
    <property type="project" value="UniProtKB-SubCell"/>
</dbReference>
<dbReference type="GO" id="GO:0016020">
    <property type="term" value="C:membrane"/>
    <property type="evidence" value="ECO:0000303"/>
    <property type="project" value="UniProtKB"/>
</dbReference>
<dbReference type="GO" id="GO:0005886">
    <property type="term" value="C:plasma membrane"/>
    <property type="evidence" value="ECO:0000318"/>
    <property type="project" value="GO_Central"/>
</dbReference>
<dbReference type="GO" id="GO:0004930">
    <property type="term" value="F:G protein-coupled receptor activity"/>
    <property type="evidence" value="ECO:0000314"/>
    <property type="project" value="UniProt"/>
</dbReference>
<dbReference type="GO" id="GO:0002300">
    <property type="term" value="P:CD8-positive, alpha-beta intraepithelial T cell differentiation"/>
    <property type="evidence" value="ECO:0007669"/>
    <property type="project" value="Ensembl"/>
</dbReference>
<dbReference type="GO" id="GO:0002305">
    <property type="term" value="P:CD8-positive, gamma-delta intraepithelial T cell differentiation"/>
    <property type="evidence" value="ECO:0007669"/>
    <property type="project" value="Ensembl"/>
</dbReference>
<dbReference type="GO" id="GO:0007186">
    <property type="term" value="P:G protein-coupled receptor signaling pathway"/>
    <property type="evidence" value="ECO:0000318"/>
    <property type="project" value="GO_Central"/>
</dbReference>
<dbReference type="GO" id="GO:0002689">
    <property type="term" value="P:negative regulation of leukocyte chemotaxis"/>
    <property type="evidence" value="ECO:0007669"/>
    <property type="project" value="Ensembl"/>
</dbReference>
<dbReference type="GO" id="GO:0032720">
    <property type="term" value="P:negative regulation of tumor necrosis factor production"/>
    <property type="evidence" value="ECO:0007669"/>
    <property type="project" value="Ensembl"/>
</dbReference>
<dbReference type="CDD" id="cd15166">
    <property type="entry name" value="7tmA_NAGly_R_GPR18"/>
    <property type="match status" value="1"/>
</dbReference>
<dbReference type="FunFam" id="1.20.1070.10:FF:000176">
    <property type="entry name" value="N-arachidonyl glycine receptor"/>
    <property type="match status" value="1"/>
</dbReference>
<dbReference type="Gene3D" id="1.20.1070.10">
    <property type="entry name" value="Rhodopsin 7-helix transmembrane proteins"/>
    <property type="match status" value="1"/>
</dbReference>
<dbReference type="InterPro" id="IPR000276">
    <property type="entry name" value="GPCR_Rhodpsn"/>
</dbReference>
<dbReference type="InterPro" id="IPR017452">
    <property type="entry name" value="GPCR_Rhodpsn_7TM"/>
</dbReference>
<dbReference type="InterPro" id="IPR028335">
    <property type="entry name" value="GPR18"/>
</dbReference>
<dbReference type="PANTHER" id="PTHR24232">
    <property type="entry name" value="G-PROTEIN COUPLED RECEPTOR"/>
    <property type="match status" value="1"/>
</dbReference>
<dbReference type="PANTHER" id="PTHR24232:SF1">
    <property type="entry name" value="N-ARACHIDONYL GLYCINE RECEPTOR"/>
    <property type="match status" value="1"/>
</dbReference>
<dbReference type="Pfam" id="PF00001">
    <property type="entry name" value="7tm_1"/>
    <property type="match status" value="1"/>
</dbReference>
<dbReference type="PRINTS" id="PR00237">
    <property type="entry name" value="GPCRRHODOPSN"/>
</dbReference>
<dbReference type="PRINTS" id="PR01157">
    <property type="entry name" value="P2YPURNOCPTR"/>
</dbReference>
<dbReference type="SUPFAM" id="SSF81321">
    <property type="entry name" value="Family A G protein-coupled receptor-like"/>
    <property type="match status" value="1"/>
</dbReference>
<dbReference type="PROSITE" id="PS00237">
    <property type="entry name" value="G_PROTEIN_RECEP_F1_1"/>
    <property type="match status" value="1"/>
</dbReference>
<dbReference type="PROSITE" id="PS50262">
    <property type="entry name" value="G_PROTEIN_RECEP_F1_2"/>
    <property type="match status" value="1"/>
</dbReference>
<organism>
    <name type="scientific">Homo sapiens</name>
    <name type="common">Human</name>
    <dbReference type="NCBI Taxonomy" id="9606"/>
    <lineage>
        <taxon>Eukaryota</taxon>
        <taxon>Metazoa</taxon>
        <taxon>Chordata</taxon>
        <taxon>Craniata</taxon>
        <taxon>Vertebrata</taxon>
        <taxon>Euteleostomi</taxon>
        <taxon>Mammalia</taxon>
        <taxon>Eutheria</taxon>
        <taxon>Euarchontoglires</taxon>
        <taxon>Primates</taxon>
        <taxon>Haplorrhini</taxon>
        <taxon>Catarrhini</taxon>
        <taxon>Hominidae</taxon>
        <taxon>Homo</taxon>
    </lineage>
</organism>
<keyword id="KW-1003">Cell membrane</keyword>
<keyword id="KW-0968">Cytoplasmic vesicle</keyword>
<keyword id="KW-1015">Disulfide bond</keyword>
<keyword id="KW-0297">G-protein coupled receptor</keyword>
<keyword id="KW-0325">Glycoprotein</keyword>
<keyword id="KW-0472">Membrane</keyword>
<keyword id="KW-0597">Phosphoprotein</keyword>
<keyword id="KW-1267">Proteomics identification</keyword>
<keyword id="KW-0675">Receptor</keyword>
<keyword id="KW-1185">Reference proteome</keyword>
<keyword id="KW-0807">Transducer</keyword>
<keyword id="KW-0812">Transmembrane</keyword>
<keyword id="KW-1133">Transmembrane helix</keyword>